<keyword id="KW-0058">Aromatic hydrocarbons catabolism</keyword>
<keyword id="KW-0520">NAD</keyword>
<keyword id="KW-0560">Oxidoreductase</keyword>
<dbReference type="EC" id="1.2.1.10" evidence="1"/>
<dbReference type="EMBL" id="CP000539">
    <property type="protein sequence ID" value="ABM40477.1"/>
    <property type="molecule type" value="Genomic_DNA"/>
</dbReference>
<dbReference type="SMR" id="A1W2K2"/>
<dbReference type="STRING" id="232721.Ajs_0223"/>
<dbReference type="KEGG" id="ajs:Ajs_0223"/>
<dbReference type="eggNOG" id="COG4569">
    <property type="taxonomic scope" value="Bacteria"/>
</dbReference>
<dbReference type="HOGENOM" id="CLU_062208_0_0_4"/>
<dbReference type="Proteomes" id="UP000000645">
    <property type="component" value="Chromosome"/>
</dbReference>
<dbReference type="GO" id="GO:0008774">
    <property type="term" value="F:acetaldehyde dehydrogenase (acetylating) activity"/>
    <property type="evidence" value="ECO:0007669"/>
    <property type="project" value="UniProtKB-UniRule"/>
</dbReference>
<dbReference type="GO" id="GO:0051287">
    <property type="term" value="F:NAD binding"/>
    <property type="evidence" value="ECO:0007669"/>
    <property type="project" value="UniProtKB-UniRule"/>
</dbReference>
<dbReference type="GO" id="GO:0009056">
    <property type="term" value="P:catabolic process"/>
    <property type="evidence" value="ECO:0007669"/>
    <property type="project" value="UniProtKB-KW"/>
</dbReference>
<dbReference type="CDD" id="cd23933">
    <property type="entry name" value="ALDH_C"/>
    <property type="match status" value="1"/>
</dbReference>
<dbReference type="Gene3D" id="3.30.360.10">
    <property type="entry name" value="Dihydrodipicolinate Reductase, domain 2"/>
    <property type="match status" value="1"/>
</dbReference>
<dbReference type="Gene3D" id="3.40.50.720">
    <property type="entry name" value="NAD(P)-binding Rossmann-like Domain"/>
    <property type="match status" value="1"/>
</dbReference>
<dbReference type="HAMAP" id="MF_01657">
    <property type="entry name" value="Ac_ald_DH_ac"/>
    <property type="match status" value="1"/>
</dbReference>
<dbReference type="InterPro" id="IPR003361">
    <property type="entry name" value="Acetaldehyde_dehydrogenase"/>
</dbReference>
<dbReference type="InterPro" id="IPR015426">
    <property type="entry name" value="Acetylaldehyde_DH_C"/>
</dbReference>
<dbReference type="InterPro" id="IPR036291">
    <property type="entry name" value="NAD(P)-bd_dom_sf"/>
</dbReference>
<dbReference type="InterPro" id="IPR000534">
    <property type="entry name" value="Semialdehyde_DH_NAD-bd"/>
</dbReference>
<dbReference type="NCBIfam" id="TIGR03215">
    <property type="entry name" value="ac_ald_DH_ac"/>
    <property type="match status" value="1"/>
</dbReference>
<dbReference type="NCBIfam" id="NF006157">
    <property type="entry name" value="PRK08300.1"/>
    <property type="match status" value="1"/>
</dbReference>
<dbReference type="Pfam" id="PF09290">
    <property type="entry name" value="AcetDehyd-dimer"/>
    <property type="match status" value="1"/>
</dbReference>
<dbReference type="Pfam" id="PF01118">
    <property type="entry name" value="Semialdhyde_dh"/>
    <property type="match status" value="1"/>
</dbReference>
<dbReference type="PIRSF" id="PIRSF015689">
    <property type="entry name" value="Actaldh_dh_actl"/>
    <property type="match status" value="1"/>
</dbReference>
<dbReference type="SMART" id="SM00859">
    <property type="entry name" value="Semialdhyde_dh"/>
    <property type="match status" value="1"/>
</dbReference>
<dbReference type="SUPFAM" id="SSF55347">
    <property type="entry name" value="Glyceraldehyde-3-phosphate dehydrogenase-like, C-terminal domain"/>
    <property type="match status" value="1"/>
</dbReference>
<dbReference type="SUPFAM" id="SSF51735">
    <property type="entry name" value="NAD(P)-binding Rossmann-fold domains"/>
    <property type="match status" value="1"/>
</dbReference>
<reference key="1">
    <citation type="submission" date="2006-12" db="EMBL/GenBank/DDBJ databases">
        <title>Complete sequence of chromosome 1 of Acidovorax sp. JS42.</title>
        <authorList>
            <person name="Copeland A."/>
            <person name="Lucas S."/>
            <person name="Lapidus A."/>
            <person name="Barry K."/>
            <person name="Detter J.C."/>
            <person name="Glavina del Rio T."/>
            <person name="Dalin E."/>
            <person name="Tice H."/>
            <person name="Pitluck S."/>
            <person name="Chertkov O."/>
            <person name="Brettin T."/>
            <person name="Bruce D."/>
            <person name="Han C."/>
            <person name="Tapia R."/>
            <person name="Gilna P."/>
            <person name="Schmutz J."/>
            <person name="Larimer F."/>
            <person name="Land M."/>
            <person name="Hauser L."/>
            <person name="Kyrpides N."/>
            <person name="Kim E."/>
            <person name="Stahl D."/>
            <person name="Richardson P."/>
        </authorList>
    </citation>
    <scope>NUCLEOTIDE SEQUENCE [LARGE SCALE GENOMIC DNA]</scope>
    <source>
        <strain>JS42</strain>
    </source>
</reference>
<gene>
    <name type="ordered locus">Ajs_0223</name>
</gene>
<protein>
    <recommendedName>
        <fullName evidence="1">Acetaldehyde dehydrogenase</fullName>
        <ecNumber evidence="1">1.2.1.10</ecNumber>
    </recommendedName>
    <alternativeName>
        <fullName evidence="1">Acetaldehyde dehydrogenase [acetylating]</fullName>
    </alternativeName>
</protein>
<comment type="catalytic activity">
    <reaction evidence="1">
        <text>acetaldehyde + NAD(+) + CoA = acetyl-CoA + NADH + H(+)</text>
        <dbReference type="Rhea" id="RHEA:23288"/>
        <dbReference type="ChEBI" id="CHEBI:15343"/>
        <dbReference type="ChEBI" id="CHEBI:15378"/>
        <dbReference type="ChEBI" id="CHEBI:57287"/>
        <dbReference type="ChEBI" id="CHEBI:57288"/>
        <dbReference type="ChEBI" id="CHEBI:57540"/>
        <dbReference type="ChEBI" id="CHEBI:57945"/>
        <dbReference type="EC" id="1.2.1.10"/>
    </reaction>
</comment>
<comment type="similarity">
    <text evidence="1">Belongs to the acetaldehyde dehydrogenase family.</text>
</comment>
<proteinExistence type="inferred from homology"/>
<accession>A1W2K2</accession>
<name>ACDH_ACISJ</name>
<feature type="chain" id="PRO_0000387614" description="Acetaldehyde dehydrogenase">
    <location>
        <begin position="1"/>
        <end position="302"/>
    </location>
</feature>
<feature type="active site" description="Acyl-thioester intermediate" evidence="1">
    <location>
        <position position="131"/>
    </location>
</feature>
<feature type="binding site" evidence="1">
    <location>
        <begin position="162"/>
        <end position="170"/>
    </location>
    <ligand>
        <name>NAD(+)</name>
        <dbReference type="ChEBI" id="CHEBI:57540"/>
    </ligand>
</feature>
<feature type="binding site" evidence="1">
    <location>
        <position position="273"/>
    </location>
    <ligand>
        <name>NAD(+)</name>
        <dbReference type="ChEBI" id="CHEBI:57540"/>
    </ligand>
</feature>
<evidence type="ECO:0000255" key="1">
    <source>
        <dbReference type="HAMAP-Rule" id="MF_01657"/>
    </source>
</evidence>
<organism>
    <name type="scientific">Acidovorax sp. (strain JS42)</name>
    <dbReference type="NCBI Taxonomy" id="232721"/>
    <lineage>
        <taxon>Bacteria</taxon>
        <taxon>Pseudomonadati</taxon>
        <taxon>Pseudomonadota</taxon>
        <taxon>Betaproteobacteria</taxon>
        <taxon>Burkholderiales</taxon>
        <taxon>Comamonadaceae</taxon>
        <taxon>Acidovorax</taxon>
    </lineage>
</organism>
<sequence>MTQKIKCALIGPGNIGTDLLAKLQRSPVLEPVWMVGIDPESDGLKRAREMGIKTTHEGVDGLIPHMKADGVQIVFDATSAYVHAENSRKVNAQGALMIDLTPAAIGPFCVPPVNLKEHVGKAEMNVNMVTCGGQATIPMVAAVSRVQPVAYGEIVATVSSRSAGPGTRKNIDEFTRTTAGAIEKVGGAQKGKAIIIINPADPPLIMRDTVHCLVEGEPDKEAITRSIHDMLAEVQKYVPGYKLVNGPVFDGNRVSVFLEVEGLGDYLPKYAGNLDIMTAAAARTAEMFAEEILAGKLTLQAA</sequence>